<evidence type="ECO:0000250" key="1"/>
<evidence type="ECO:0000255" key="2"/>
<evidence type="ECO:0000269" key="3">
    <source>
    </source>
</evidence>
<evidence type="ECO:0000269" key="4">
    <source>
    </source>
</evidence>
<evidence type="ECO:0000269" key="5">
    <source>
    </source>
</evidence>
<evidence type="ECO:0000269" key="6">
    <source>
    </source>
</evidence>
<evidence type="ECO:0000269" key="7">
    <source>
    </source>
</evidence>
<evidence type="ECO:0000269" key="8">
    <source>
    </source>
</evidence>
<evidence type="ECO:0000269" key="9">
    <source>
    </source>
</evidence>
<evidence type="ECO:0000269" key="10">
    <source>
    </source>
</evidence>
<evidence type="ECO:0000269" key="11">
    <source>
    </source>
</evidence>
<evidence type="ECO:0000305" key="12"/>
<evidence type="ECO:0000305" key="13">
    <source>
    </source>
</evidence>
<evidence type="ECO:0000305" key="14">
    <source>
    </source>
</evidence>
<evidence type="ECO:0000305" key="15">
    <source>
    </source>
</evidence>
<evidence type="ECO:0000305" key="16">
    <source>
    </source>
</evidence>
<evidence type="ECO:0000305" key="17">
    <source>
    </source>
</evidence>
<evidence type="ECO:0000305" key="18">
    <source>
    </source>
</evidence>
<evidence type="ECO:0007829" key="19">
    <source>
        <dbReference type="PDB" id="3HD6"/>
    </source>
</evidence>
<keyword id="KW-0002">3D-structure</keyword>
<keyword id="KW-0924">Ammonia transport</keyword>
<keyword id="KW-1003">Cell membrane</keyword>
<keyword id="KW-0325">Glycoprotein</keyword>
<keyword id="KW-0472">Membrane</keyword>
<keyword id="KW-1267">Proteomics identification</keyword>
<keyword id="KW-1185">Reference proteome</keyword>
<keyword id="KW-0812">Transmembrane</keyword>
<keyword id="KW-1133">Transmembrane helix</keyword>
<keyword id="KW-0813">Transport</keyword>
<sequence>MAWNTNLRWRLPLTCLLLQVIMVILFGVFVRYDFEADAHWWSERTHKNLSDMENEFYYRYPSFQDVHVMVFVGFGFLMTFLQRYGFSAVGFNFLLAAFGIQWALLMQGWFHFLQDRYIVVGVENLINADFCVASVCVAFGAVLGKVSPIQLLIMTFFQVTLFAVNEFILLNLLKVKDAGGSMTIHTFGAYFGLTVTRILYRRNLEQSKERQNSVYQSDLFAMIGTLFLWMYWPSFNSAISYHGDSQHRAAINTYCSLAACVLTSVAISSALHKKGKLDMVHIQNATLAGGVAVGTAAEMMLMPYGALIIGFVCGIISTLGFVYLTPFLESRLHIQDTCGINNLHGIPGIIGGIVGAVTAASASLEVYGKEGLVHSFDFQGFNGDWTARTQGKFQIYGLLVTLAMALMGGIIVGLILRLPFWGQPSDENCFEDAVYWEMPEGNSTVYIPEDPTFKPSGPSVPSVPMVSPLPMASSVPLVP</sequence>
<dbReference type="EMBL" id="AF193809">
    <property type="protein sequence ID" value="AAF19372.1"/>
    <property type="molecule type" value="mRNA"/>
</dbReference>
<dbReference type="EMBL" id="AF219986">
    <property type="protein sequence ID" value="AAG02171.1"/>
    <property type="molecule type" value="Genomic_DNA"/>
</dbReference>
<dbReference type="EMBL" id="AF219981">
    <property type="protein sequence ID" value="AAG02171.1"/>
    <property type="status" value="JOINED"/>
    <property type="molecule type" value="Genomic_DNA"/>
</dbReference>
<dbReference type="EMBL" id="AF219982">
    <property type="protein sequence ID" value="AAG02171.1"/>
    <property type="status" value="JOINED"/>
    <property type="molecule type" value="Genomic_DNA"/>
</dbReference>
<dbReference type="EMBL" id="AF219983">
    <property type="protein sequence ID" value="AAG02171.1"/>
    <property type="status" value="JOINED"/>
    <property type="molecule type" value="Genomic_DNA"/>
</dbReference>
<dbReference type="EMBL" id="AF219984">
    <property type="protein sequence ID" value="AAG02171.1"/>
    <property type="status" value="JOINED"/>
    <property type="molecule type" value="Genomic_DNA"/>
</dbReference>
<dbReference type="EMBL" id="AF219985">
    <property type="protein sequence ID" value="AAG02171.1"/>
    <property type="status" value="JOINED"/>
    <property type="molecule type" value="Genomic_DNA"/>
</dbReference>
<dbReference type="EMBL" id="AF081497">
    <property type="protein sequence ID" value="AAD55748.1"/>
    <property type="molecule type" value="mRNA"/>
</dbReference>
<dbReference type="EMBL" id="AF284446">
    <property type="protein sequence ID" value="AAG02414.1"/>
    <property type="molecule type" value="Genomic_DNA"/>
</dbReference>
<dbReference type="EMBL" id="AY257182">
    <property type="protein sequence ID" value="AAP81044.1"/>
    <property type="molecule type" value="mRNA"/>
</dbReference>
<dbReference type="EMBL" id="AK290899">
    <property type="protein sequence ID" value="BAF83588.1"/>
    <property type="molecule type" value="mRNA"/>
</dbReference>
<dbReference type="EMBL" id="AK313238">
    <property type="protein sequence ID" value="BAG36049.1"/>
    <property type="molecule type" value="mRNA"/>
</dbReference>
<dbReference type="EMBL" id="AC013391">
    <property type="status" value="NOT_ANNOTATED_CDS"/>
    <property type="molecule type" value="Genomic_DNA"/>
</dbReference>
<dbReference type="EMBL" id="CH471101">
    <property type="protein sequence ID" value="EAX02051.1"/>
    <property type="molecule type" value="Genomic_DNA"/>
</dbReference>
<dbReference type="EMBL" id="BC030965">
    <property type="protein sequence ID" value="AAH30965.1"/>
    <property type="molecule type" value="mRNA"/>
</dbReference>
<dbReference type="CCDS" id="CCDS10351.1"/>
<dbReference type="RefSeq" id="NP_001307970.1">
    <property type="nucleotide sequence ID" value="NM_001321041.2"/>
</dbReference>
<dbReference type="RefSeq" id="NP_057405.1">
    <property type="nucleotide sequence ID" value="NM_016321.3"/>
</dbReference>
<dbReference type="RefSeq" id="XP_047288607.1">
    <property type="nucleotide sequence ID" value="XM_047432651.1"/>
</dbReference>
<dbReference type="RefSeq" id="XP_054234141.1">
    <property type="nucleotide sequence ID" value="XM_054378166.1"/>
</dbReference>
<dbReference type="PDB" id="3HD6">
    <property type="method" value="X-ray"/>
    <property type="resolution" value="2.10 A"/>
    <property type="chains" value="A=2-479"/>
</dbReference>
<dbReference type="PDBsum" id="3HD6"/>
<dbReference type="SMR" id="Q9UBD6"/>
<dbReference type="BioGRID" id="119552">
    <property type="interactions" value="28"/>
</dbReference>
<dbReference type="DIP" id="DIP-59334N"/>
<dbReference type="FunCoup" id="Q9UBD6">
    <property type="interactions" value="87"/>
</dbReference>
<dbReference type="IntAct" id="Q9UBD6">
    <property type="interactions" value="17"/>
</dbReference>
<dbReference type="STRING" id="9606.ENSP00000268122"/>
<dbReference type="DrugBank" id="DB09326">
    <property type="generic name" value="Ammonia N-13"/>
</dbReference>
<dbReference type="TCDB" id="1.A.11.4.1">
    <property type="family name" value="the ammonium transporter channel (amt) family"/>
</dbReference>
<dbReference type="GlyCosmos" id="Q9UBD6">
    <property type="glycosylation" value="1 site, No reported glycans"/>
</dbReference>
<dbReference type="GlyGen" id="Q9UBD6">
    <property type="glycosylation" value="1 site"/>
</dbReference>
<dbReference type="iPTMnet" id="Q9UBD6"/>
<dbReference type="PhosphoSitePlus" id="Q9UBD6"/>
<dbReference type="BioMuta" id="RHCG"/>
<dbReference type="DMDM" id="74734928"/>
<dbReference type="jPOST" id="Q9UBD6"/>
<dbReference type="MassIVE" id="Q9UBD6"/>
<dbReference type="PaxDb" id="9606-ENSP00000268122"/>
<dbReference type="PeptideAtlas" id="Q9UBD6"/>
<dbReference type="PRIDE" id="Q9UBD6"/>
<dbReference type="ProteomicsDB" id="83949"/>
<dbReference type="Antibodypedia" id="28582">
    <property type="antibodies" value="275 antibodies from 31 providers"/>
</dbReference>
<dbReference type="DNASU" id="51458"/>
<dbReference type="Ensembl" id="ENST00000268122.9">
    <property type="protein sequence ID" value="ENSP00000268122.4"/>
    <property type="gene ID" value="ENSG00000140519.14"/>
</dbReference>
<dbReference type="GeneID" id="51458"/>
<dbReference type="KEGG" id="hsa:51458"/>
<dbReference type="MANE-Select" id="ENST00000268122.9">
    <property type="protein sequence ID" value="ENSP00000268122.4"/>
    <property type="RefSeq nucleotide sequence ID" value="NM_016321.3"/>
    <property type="RefSeq protein sequence ID" value="NP_057405.1"/>
</dbReference>
<dbReference type="UCSC" id="uc002bnz.4">
    <property type="organism name" value="human"/>
</dbReference>
<dbReference type="AGR" id="HGNC:18140"/>
<dbReference type="CTD" id="51458"/>
<dbReference type="DisGeNET" id="51458"/>
<dbReference type="GeneCards" id="RHCG"/>
<dbReference type="HGNC" id="HGNC:18140">
    <property type="gene designation" value="RHCG"/>
</dbReference>
<dbReference type="HPA" id="ENSG00000140519">
    <property type="expression patterns" value="Tissue enhanced (esophagus, vagina)"/>
</dbReference>
<dbReference type="MIM" id="605381">
    <property type="type" value="gene"/>
</dbReference>
<dbReference type="neXtProt" id="NX_Q9UBD6"/>
<dbReference type="OpenTargets" id="ENSG00000140519"/>
<dbReference type="PharmGKB" id="PA134876043"/>
<dbReference type="VEuPathDB" id="HostDB:ENSG00000140519"/>
<dbReference type="eggNOG" id="KOG3796">
    <property type="taxonomic scope" value="Eukaryota"/>
</dbReference>
<dbReference type="GeneTree" id="ENSGT00950000182844"/>
<dbReference type="HOGENOM" id="CLU_021386_0_0_1"/>
<dbReference type="InParanoid" id="Q9UBD6"/>
<dbReference type="OMA" id="NCFEDDV"/>
<dbReference type="OrthoDB" id="534912at2759"/>
<dbReference type="PAN-GO" id="Q9UBD6">
    <property type="GO annotations" value="6 GO annotations based on evolutionary models"/>
</dbReference>
<dbReference type="PhylomeDB" id="Q9UBD6"/>
<dbReference type="TreeFam" id="TF314450"/>
<dbReference type="PathwayCommons" id="Q9UBD6"/>
<dbReference type="Reactome" id="R-HSA-444411">
    <property type="pathway name" value="Rhesus glycoproteins mediate ammonium transport"/>
</dbReference>
<dbReference type="SignaLink" id="Q9UBD6"/>
<dbReference type="BioGRID-ORCS" id="51458">
    <property type="hits" value="6 hits in 1137 CRISPR screens"/>
</dbReference>
<dbReference type="ChiTaRS" id="RHCG">
    <property type="organism name" value="human"/>
</dbReference>
<dbReference type="EvolutionaryTrace" id="Q9UBD6"/>
<dbReference type="GeneWiki" id="RHCG"/>
<dbReference type="GenomeRNAi" id="51458"/>
<dbReference type="Pharos" id="Q9UBD6">
    <property type="development level" value="Tbio"/>
</dbReference>
<dbReference type="PRO" id="PR:Q9UBD6"/>
<dbReference type="Proteomes" id="UP000005640">
    <property type="component" value="Chromosome 15"/>
</dbReference>
<dbReference type="RNAct" id="Q9UBD6">
    <property type="molecule type" value="protein"/>
</dbReference>
<dbReference type="Bgee" id="ENSG00000140519">
    <property type="expression patterns" value="Expressed in lower esophagus mucosa and 112 other cell types or tissues"/>
</dbReference>
<dbReference type="ExpressionAtlas" id="Q9UBD6">
    <property type="expression patterns" value="baseline and differential"/>
</dbReference>
<dbReference type="GO" id="GO:0016324">
    <property type="term" value="C:apical plasma membrane"/>
    <property type="evidence" value="ECO:0000314"/>
    <property type="project" value="UniProtKB"/>
</dbReference>
<dbReference type="GO" id="GO:0016323">
    <property type="term" value="C:basolateral plasma membrane"/>
    <property type="evidence" value="ECO:0000314"/>
    <property type="project" value="UniProtKB"/>
</dbReference>
<dbReference type="GO" id="GO:0031410">
    <property type="term" value="C:cytoplasmic vesicle"/>
    <property type="evidence" value="ECO:0000250"/>
    <property type="project" value="UniProtKB"/>
</dbReference>
<dbReference type="GO" id="GO:0070062">
    <property type="term" value="C:extracellular exosome"/>
    <property type="evidence" value="ECO:0007005"/>
    <property type="project" value="UniProtKB"/>
</dbReference>
<dbReference type="GO" id="GO:0005886">
    <property type="term" value="C:plasma membrane"/>
    <property type="evidence" value="ECO:0000314"/>
    <property type="project" value="UniProtKB"/>
</dbReference>
<dbReference type="GO" id="GO:0008519">
    <property type="term" value="F:ammonium channel activity"/>
    <property type="evidence" value="ECO:0000314"/>
    <property type="project" value="UniProtKB"/>
</dbReference>
<dbReference type="GO" id="GO:0030506">
    <property type="term" value="F:ankyrin binding"/>
    <property type="evidence" value="ECO:0000314"/>
    <property type="project" value="UniProtKB"/>
</dbReference>
<dbReference type="GO" id="GO:0035379">
    <property type="term" value="F:carbon dioxide transmembrane transporter activity"/>
    <property type="evidence" value="ECO:0000314"/>
    <property type="project" value="UniProtKB"/>
</dbReference>
<dbReference type="GO" id="GO:0042802">
    <property type="term" value="F:identical protein binding"/>
    <property type="evidence" value="ECO:0000353"/>
    <property type="project" value="IntAct"/>
</dbReference>
<dbReference type="GO" id="GO:0015837">
    <property type="term" value="P:amine transport"/>
    <property type="evidence" value="ECO:0000303"/>
    <property type="project" value="UniProtKB"/>
</dbReference>
<dbReference type="GO" id="GO:0097272">
    <property type="term" value="P:ammonium homeostasis"/>
    <property type="evidence" value="ECO:0000318"/>
    <property type="project" value="GO_Central"/>
</dbReference>
<dbReference type="GO" id="GO:0072488">
    <property type="term" value="P:ammonium transmembrane transport"/>
    <property type="evidence" value="ECO:0000314"/>
    <property type="project" value="UniProtKB"/>
</dbReference>
<dbReference type="GO" id="GO:0030855">
    <property type="term" value="P:epithelial cell differentiation"/>
    <property type="evidence" value="ECO:0000303"/>
    <property type="project" value="UniProtKB"/>
</dbReference>
<dbReference type="GO" id="GO:0042592">
    <property type="term" value="P:homeostatic process"/>
    <property type="evidence" value="ECO:0000303"/>
    <property type="project" value="UniProtKB"/>
</dbReference>
<dbReference type="GO" id="GO:0006873">
    <property type="term" value="P:intracellular monoatomic ion homeostasis"/>
    <property type="evidence" value="ECO:0000314"/>
    <property type="project" value="UniProtKB"/>
</dbReference>
<dbReference type="GO" id="GO:0006885">
    <property type="term" value="P:regulation of pH"/>
    <property type="evidence" value="ECO:0007669"/>
    <property type="project" value="Ensembl"/>
</dbReference>
<dbReference type="GO" id="GO:0070634">
    <property type="term" value="P:transepithelial ammonium transport"/>
    <property type="evidence" value="ECO:0000314"/>
    <property type="project" value="UniProtKB"/>
</dbReference>
<dbReference type="FunFam" id="1.10.3430.10:FF:000001">
    <property type="entry name" value="Ammonium transporter Rh type C"/>
    <property type="match status" value="1"/>
</dbReference>
<dbReference type="Gene3D" id="1.10.3430.10">
    <property type="entry name" value="Ammonium transporter AmtB like domains"/>
    <property type="match status" value="1"/>
</dbReference>
<dbReference type="InterPro" id="IPR029020">
    <property type="entry name" value="Ammonium/urea_transptr"/>
</dbReference>
<dbReference type="InterPro" id="IPR024041">
    <property type="entry name" value="NH4_transpt_AmtB-like_dom"/>
</dbReference>
<dbReference type="InterPro" id="IPR002229">
    <property type="entry name" value="RhesusRHD"/>
</dbReference>
<dbReference type="PANTHER" id="PTHR11730">
    <property type="entry name" value="AMMONIUM TRANSPORTER"/>
    <property type="match status" value="1"/>
</dbReference>
<dbReference type="PANTHER" id="PTHR11730:SF30">
    <property type="entry name" value="AMMONIUM TRANSPORTER RH TYPE C"/>
    <property type="match status" value="1"/>
</dbReference>
<dbReference type="Pfam" id="PF00909">
    <property type="entry name" value="Ammonium_transp"/>
    <property type="match status" value="1"/>
</dbReference>
<dbReference type="PRINTS" id="PR00342">
    <property type="entry name" value="RHESUSRHD"/>
</dbReference>
<dbReference type="SUPFAM" id="SSF111352">
    <property type="entry name" value="Ammonium transporter"/>
    <property type="match status" value="1"/>
</dbReference>
<feature type="chain" id="PRO_0000283577" description="Ammonium transporter Rh type C">
    <location>
        <begin position="1"/>
        <end position="479"/>
    </location>
</feature>
<feature type="topological domain" description="Cytoplasmic" evidence="2">
    <location>
        <begin position="1"/>
        <end position="9"/>
    </location>
</feature>
<feature type="transmembrane region" description="Helical" evidence="2">
    <location>
        <begin position="10"/>
        <end position="30"/>
    </location>
</feature>
<feature type="topological domain" description="Extracellular" evidence="2">
    <location>
        <begin position="31"/>
        <end position="60"/>
    </location>
</feature>
<feature type="transmembrane region" description="Helical" evidence="2">
    <location>
        <begin position="61"/>
        <end position="81"/>
    </location>
</feature>
<feature type="topological domain" description="Cytoplasmic" evidence="2">
    <location>
        <begin position="82"/>
        <end position="85"/>
    </location>
</feature>
<feature type="transmembrane region" description="Helical" evidence="2">
    <location>
        <begin position="86"/>
        <end position="106"/>
    </location>
</feature>
<feature type="topological domain" description="Extracellular" evidence="2">
    <location>
        <begin position="107"/>
        <end position="123"/>
    </location>
</feature>
<feature type="transmembrane region" description="Helical" evidence="2">
    <location>
        <begin position="124"/>
        <end position="144"/>
    </location>
</feature>
<feature type="topological domain" description="Cytoplasmic" evidence="2">
    <location>
        <begin position="145"/>
        <end position="148"/>
    </location>
</feature>
<feature type="transmembrane region" description="Helical" evidence="2">
    <location>
        <begin position="149"/>
        <end position="169"/>
    </location>
</feature>
<feature type="topological domain" description="Extracellular" evidence="2">
    <location>
        <begin position="170"/>
        <end position="177"/>
    </location>
</feature>
<feature type="transmembrane region" description="Helical" evidence="2">
    <location>
        <begin position="178"/>
        <end position="200"/>
    </location>
</feature>
<feature type="topological domain" description="Cytoplasmic" evidence="2">
    <location>
        <begin position="201"/>
        <end position="218"/>
    </location>
</feature>
<feature type="transmembrane region" description="Helical" evidence="2">
    <location>
        <begin position="219"/>
        <end position="239"/>
    </location>
</feature>
<feature type="topological domain" description="Extracellular" evidence="2">
    <location>
        <begin position="240"/>
        <end position="250"/>
    </location>
</feature>
<feature type="transmembrane region" description="Helical" evidence="2">
    <location>
        <begin position="251"/>
        <end position="271"/>
    </location>
</feature>
<feature type="topological domain" description="Cytoplasmic" evidence="2">
    <location>
        <begin position="272"/>
        <end position="281"/>
    </location>
</feature>
<feature type="transmembrane region" description="Helical" evidence="2">
    <location>
        <begin position="282"/>
        <end position="302"/>
    </location>
</feature>
<feature type="topological domain" description="Extracellular" evidence="2">
    <location>
        <position position="303"/>
    </location>
</feature>
<feature type="transmembrane region" description="Helical" evidence="2">
    <location>
        <begin position="304"/>
        <end position="324"/>
    </location>
</feature>
<feature type="topological domain" description="Cytoplasmic" evidence="2">
    <location>
        <begin position="325"/>
        <end position="345"/>
    </location>
</feature>
<feature type="transmembrane region" description="Helical" evidence="2">
    <location>
        <begin position="346"/>
        <end position="366"/>
    </location>
</feature>
<feature type="topological domain" description="Extracellular" evidence="2">
    <location>
        <begin position="367"/>
        <end position="394"/>
    </location>
</feature>
<feature type="transmembrane region" description="Helical" evidence="2">
    <location>
        <begin position="395"/>
        <end position="415"/>
    </location>
</feature>
<feature type="topological domain" description="Cytoplasmic" evidence="2">
    <location>
        <begin position="416"/>
        <end position="479"/>
    </location>
</feature>
<feature type="glycosylation site" description="N-linked (GlcNAc...) asparagine" evidence="10">
    <location>
        <position position="48"/>
    </location>
</feature>
<feature type="sequence variant" id="VAR_031496" description="In dbSNP:rs17807723.">
    <original>R</original>
    <variation>C</variation>
    <location>
        <position position="202"/>
    </location>
</feature>
<feature type="mutagenesis site" description="Reduction of ammonia transport." evidence="9">
    <original>F</original>
    <variation>L</variation>
    <location>
        <position position="74"/>
    </location>
</feature>
<feature type="mutagenesis site" description="Reduction of ammonia transport." evidence="9">
    <original>V</original>
    <variation>I</variation>
    <location>
        <position position="137"/>
    </location>
</feature>
<feature type="mutagenesis site" description="Loss of function." evidence="8 11">
    <original>D</original>
    <variation>N</variation>
    <location>
        <position position="177"/>
    </location>
</feature>
<feature type="mutagenesis site" description="Reduction of ammonia transport." evidence="9">
    <original>F</original>
    <variation>V</variation>
    <location>
        <position position="235"/>
    </location>
</feature>
<feature type="sequence conflict" description="In Ref. 6; AAP81044." evidence="12" ref="6">
    <original>H</original>
    <variation>R</variation>
    <location>
        <position position="242"/>
    </location>
</feature>
<feature type="sequence conflict" description="In Ref. 6; AAP81044." evidence="12" ref="6">
    <original>N</original>
    <variation>D</variation>
    <location>
        <position position="442"/>
    </location>
</feature>
<feature type="helix" evidence="19">
    <location>
        <begin position="10"/>
        <end position="29"/>
    </location>
</feature>
<feature type="helix" evidence="19">
    <location>
        <begin position="55"/>
        <end position="71"/>
    </location>
</feature>
<feature type="helix" evidence="19">
    <location>
        <begin position="73"/>
        <end position="77"/>
    </location>
</feature>
<feature type="helix" evidence="19">
    <location>
        <begin position="78"/>
        <end position="80"/>
    </location>
</feature>
<feature type="helix" evidence="19">
    <location>
        <begin position="85"/>
        <end position="109"/>
    </location>
</feature>
<feature type="turn" evidence="19">
    <location>
        <begin position="114"/>
        <end position="116"/>
    </location>
</feature>
<feature type="strand" evidence="19">
    <location>
        <begin position="117"/>
        <end position="119"/>
    </location>
</feature>
<feature type="helix" evidence="19">
    <location>
        <begin position="122"/>
        <end position="142"/>
    </location>
</feature>
<feature type="helix" evidence="19">
    <location>
        <begin position="148"/>
        <end position="170"/>
    </location>
</feature>
<feature type="turn" evidence="19">
    <location>
        <begin position="181"/>
        <end position="184"/>
    </location>
</feature>
<feature type="helix" evidence="19">
    <location>
        <begin position="185"/>
        <end position="198"/>
    </location>
</feature>
<feature type="helix" evidence="19">
    <location>
        <begin position="204"/>
        <end position="207"/>
    </location>
</feature>
<feature type="turn" evidence="19">
    <location>
        <begin position="208"/>
        <end position="210"/>
    </location>
</feature>
<feature type="helix" evidence="19">
    <location>
        <begin position="215"/>
        <end position="235"/>
    </location>
</feature>
<feature type="turn" evidence="19">
    <location>
        <begin position="236"/>
        <end position="239"/>
    </location>
</feature>
<feature type="helix" evidence="19">
    <location>
        <begin position="243"/>
        <end position="270"/>
    </location>
</feature>
<feature type="helix" evidence="19">
    <location>
        <begin position="279"/>
        <end position="284"/>
    </location>
</feature>
<feature type="helix" evidence="19">
    <location>
        <begin position="285"/>
        <end position="287"/>
    </location>
</feature>
<feature type="helix" evidence="19">
    <location>
        <begin position="288"/>
        <end position="292"/>
    </location>
</feature>
<feature type="turn" evidence="19">
    <location>
        <begin position="293"/>
        <end position="299"/>
    </location>
</feature>
<feature type="helix" evidence="19">
    <location>
        <begin position="303"/>
        <end position="332"/>
    </location>
</feature>
<feature type="helix" evidence="19">
    <location>
        <begin position="340"/>
        <end position="343"/>
    </location>
</feature>
<feature type="helix" evidence="19">
    <location>
        <begin position="345"/>
        <end position="360"/>
    </location>
</feature>
<feature type="helix" evidence="19">
    <location>
        <begin position="385"/>
        <end position="416"/>
    </location>
</feature>
<feature type="helix" evidence="19">
    <location>
        <begin position="432"/>
        <end position="434"/>
    </location>
</feature>
<feature type="turn" evidence="19">
    <location>
        <begin position="440"/>
        <end position="442"/>
    </location>
</feature>
<reference key="1">
    <citation type="journal article" date="2000" name="J. Biol. Chem.">
        <title>Characterization of human RhCG and mouse Rhcg as novel nonerythroid Rh glycoprotein homologues predominantly expressed in kidney and testis.</title>
        <authorList>
            <person name="Liu Z."/>
            <person name="Chen Y."/>
            <person name="Mo R."/>
            <person name="Hui C.-C."/>
            <person name="Cheng J.-F."/>
            <person name="Mohandas N."/>
            <person name="Huang C.-H."/>
        </authorList>
    </citation>
    <scope>NUCLEOTIDE SEQUENCE [GENOMIC DNA / MRNA]</scope>
    <scope>TISSUE SPECIFICITY</scope>
    <scope>DEVELOPMENTAL STAGE</scope>
    <scope>SUBCELLULAR LOCATION</scope>
    <scope>GLYCOSYLATION</scope>
    <source>
        <tissue>Kidney</tissue>
    </source>
</reference>
<reference key="2">
    <citation type="journal article" date="2002" name="Eur. J. Cancer">
        <title>RhCG is downregulated in oesophageal squamous cell carcinomas, but expressed in multiple squamous epithelia.</title>
        <authorList>
            <person name="Chen B.-S."/>
            <person name="Xu Z.-X."/>
            <person name="Xu X."/>
            <person name="Cai Y."/>
            <person name="Han Y.-L."/>
            <person name="Wang J."/>
            <person name="Xia S.-H."/>
            <person name="Hu H."/>
            <person name="Wei F."/>
            <person name="Wu M."/>
            <person name="Wang M.-R."/>
        </authorList>
    </citation>
    <scope>NUCLEOTIDE SEQUENCE [GENOMIC DNA / MRNA]</scope>
    <scope>TISSUE SPECIFICITY</scope>
    <scope>SUBCELLULAR LOCATION</scope>
    <source>
        <tissue>Placenta</tissue>
    </source>
</reference>
<reference key="3">
    <citation type="journal article" date="2004" name="Nat. Genet.">
        <title>Complete sequencing and characterization of 21,243 full-length human cDNAs.</title>
        <authorList>
            <person name="Ota T."/>
            <person name="Suzuki Y."/>
            <person name="Nishikawa T."/>
            <person name="Otsuki T."/>
            <person name="Sugiyama T."/>
            <person name="Irie R."/>
            <person name="Wakamatsu A."/>
            <person name="Hayashi K."/>
            <person name="Sato H."/>
            <person name="Nagai K."/>
            <person name="Kimura K."/>
            <person name="Makita H."/>
            <person name="Sekine M."/>
            <person name="Obayashi M."/>
            <person name="Nishi T."/>
            <person name="Shibahara T."/>
            <person name="Tanaka T."/>
            <person name="Ishii S."/>
            <person name="Yamamoto J."/>
            <person name="Saito K."/>
            <person name="Kawai Y."/>
            <person name="Isono Y."/>
            <person name="Nakamura Y."/>
            <person name="Nagahari K."/>
            <person name="Murakami K."/>
            <person name="Yasuda T."/>
            <person name="Iwayanagi T."/>
            <person name="Wagatsuma M."/>
            <person name="Shiratori A."/>
            <person name="Sudo H."/>
            <person name="Hosoiri T."/>
            <person name="Kaku Y."/>
            <person name="Kodaira H."/>
            <person name="Kondo H."/>
            <person name="Sugawara M."/>
            <person name="Takahashi M."/>
            <person name="Kanda K."/>
            <person name="Yokoi T."/>
            <person name="Furuya T."/>
            <person name="Kikkawa E."/>
            <person name="Omura Y."/>
            <person name="Abe K."/>
            <person name="Kamihara K."/>
            <person name="Katsuta N."/>
            <person name="Sato K."/>
            <person name="Tanikawa M."/>
            <person name="Yamazaki M."/>
            <person name="Ninomiya K."/>
            <person name="Ishibashi T."/>
            <person name="Yamashita H."/>
            <person name="Murakawa K."/>
            <person name="Fujimori K."/>
            <person name="Tanai H."/>
            <person name="Kimata M."/>
            <person name="Watanabe M."/>
            <person name="Hiraoka S."/>
            <person name="Chiba Y."/>
            <person name="Ishida S."/>
            <person name="Ono Y."/>
            <person name="Takiguchi S."/>
            <person name="Watanabe S."/>
            <person name="Yosida M."/>
            <person name="Hotuta T."/>
            <person name="Kusano J."/>
            <person name="Kanehori K."/>
            <person name="Takahashi-Fujii A."/>
            <person name="Hara H."/>
            <person name="Tanase T.-O."/>
            <person name="Nomura Y."/>
            <person name="Togiya S."/>
            <person name="Komai F."/>
            <person name="Hara R."/>
            <person name="Takeuchi K."/>
            <person name="Arita M."/>
            <person name="Imose N."/>
            <person name="Musashino K."/>
            <person name="Yuuki H."/>
            <person name="Oshima A."/>
            <person name="Sasaki N."/>
            <person name="Aotsuka S."/>
            <person name="Yoshikawa Y."/>
            <person name="Matsunawa H."/>
            <person name="Ichihara T."/>
            <person name="Shiohata N."/>
            <person name="Sano S."/>
            <person name="Moriya S."/>
            <person name="Momiyama H."/>
            <person name="Satoh N."/>
            <person name="Takami S."/>
            <person name="Terashima Y."/>
            <person name="Suzuki O."/>
            <person name="Nakagawa S."/>
            <person name="Senoh A."/>
            <person name="Mizoguchi H."/>
            <person name="Goto Y."/>
            <person name="Shimizu F."/>
            <person name="Wakebe H."/>
            <person name="Hishigaki H."/>
            <person name="Watanabe T."/>
            <person name="Sugiyama A."/>
            <person name="Takemoto M."/>
            <person name="Kawakami B."/>
            <person name="Yamazaki M."/>
            <person name="Watanabe K."/>
            <person name="Kumagai A."/>
            <person name="Itakura S."/>
            <person name="Fukuzumi Y."/>
            <person name="Fujimori Y."/>
            <person name="Komiyama M."/>
            <person name="Tashiro H."/>
            <person name="Tanigami A."/>
            <person name="Fujiwara T."/>
            <person name="Ono T."/>
            <person name="Yamada K."/>
            <person name="Fujii Y."/>
            <person name="Ozaki K."/>
            <person name="Hirao M."/>
            <person name="Ohmori Y."/>
            <person name="Kawabata A."/>
            <person name="Hikiji T."/>
            <person name="Kobatake N."/>
            <person name="Inagaki H."/>
            <person name="Ikema Y."/>
            <person name="Okamoto S."/>
            <person name="Okitani R."/>
            <person name="Kawakami T."/>
            <person name="Noguchi S."/>
            <person name="Itoh T."/>
            <person name="Shigeta K."/>
            <person name="Senba T."/>
            <person name="Matsumura K."/>
            <person name="Nakajima Y."/>
            <person name="Mizuno T."/>
            <person name="Morinaga M."/>
            <person name="Sasaki M."/>
            <person name="Togashi T."/>
            <person name="Oyama M."/>
            <person name="Hata H."/>
            <person name="Watanabe M."/>
            <person name="Komatsu T."/>
            <person name="Mizushima-Sugano J."/>
            <person name="Satoh T."/>
            <person name="Shirai Y."/>
            <person name="Takahashi Y."/>
            <person name="Nakagawa K."/>
            <person name="Okumura K."/>
            <person name="Nagase T."/>
            <person name="Nomura N."/>
            <person name="Kikuchi H."/>
            <person name="Masuho Y."/>
            <person name="Yamashita R."/>
            <person name="Nakai K."/>
            <person name="Yada T."/>
            <person name="Nakamura Y."/>
            <person name="Ohara O."/>
            <person name="Isogai T."/>
            <person name="Sugano S."/>
        </authorList>
    </citation>
    <scope>NUCLEOTIDE SEQUENCE [LARGE SCALE MRNA]</scope>
    <source>
        <tissue>Esophagus</tissue>
        <tissue>Tongue</tissue>
    </source>
</reference>
<reference key="4">
    <citation type="journal article" date="2006" name="Nature">
        <title>Analysis of the DNA sequence and duplication history of human chromosome 15.</title>
        <authorList>
            <person name="Zody M.C."/>
            <person name="Garber M."/>
            <person name="Sharpe T."/>
            <person name="Young S.K."/>
            <person name="Rowen L."/>
            <person name="O'Neill K."/>
            <person name="Whittaker C.A."/>
            <person name="Kamal M."/>
            <person name="Chang J.L."/>
            <person name="Cuomo C.A."/>
            <person name="Dewar K."/>
            <person name="FitzGerald M.G."/>
            <person name="Kodira C.D."/>
            <person name="Madan A."/>
            <person name="Qin S."/>
            <person name="Yang X."/>
            <person name="Abbasi N."/>
            <person name="Abouelleil A."/>
            <person name="Arachchi H.M."/>
            <person name="Baradarani L."/>
            <person name="Birditt B."/>
            <person name="Bloom S."/>
            <person name="Bloom T."/>
            <person name="Borowsky M.L."/>
            <person name="Burke J."/>
            <person name="Butler J."/>
            <person name="Cook A."/>
            <person name="DeArellano K."/>
            <person name="DeCaprio D."/>
            <person name="Dorris L. III"/>
            <person name="Dors M."/>
            <person name="Eichler E.E."/>
            <person name="Engels R."/>
            <person name="Fahey J."/>
            <person name="Fleetwood P."/>
            <person name="Friedman C."/>
            <person name="Gearin G."/>
            <person name="Hall J.L."/>
            <person name="Hensley G."/>
            <person name="Johnson E."/>
            <person name="Jones C."/>
            <person name="Kamat A."/>
            <person name="Kaur A."/>
            <person name="Locke D.P."/>
            <person name="Madan A."/>
            <person name="Munson G."/>
            <person name="Jaffe D.B."/>
            <person name="Lui A."/>
            <person name="Macdonald P."/>
            <person name="Mauceli E."/>
            <person name="Naylor J.W."/>
            <person name="Nesbitt R."/>
            <person name="Nicol R."/>
            <person name="O'Leary S.B."/>
            <person name="Ratcliffe A."/>
            <person name="Rounsley S."/>
            <person name="She X."/>
            <person name="Sneddon K.M.B."/>
            <person name="Stewart S."/>
            <person name="Sougnez C."/>
            <person name="Stone S.M."/>
            <person name="Topham K."/>
            <person name="Vincent D."/>
            <person name="Wang S."/>
            <person name="Zimmer A.R."/>
            <person name="Birren B.W."/>
            <person name="Hood L."/>
            <person name="Lander E.S."/>
            <person name="Nusbaum C."/>
        </authorList>
    </citation>
    <scope>NUCLEOTIDE SEQUENCE [LARGE SCALE GENOMIC DNA]</scope>
</reference>
<reference key="5">
    <citation type="submission" date="2005-07" db="EMBL/GenBank/DDBJ databases">
        <authorList>
            <person name="Mural R.J."/>
            <person name="Istrail S."/>
            <person name="Sutton G."/>
            <person name="Florea L."/>
            <person name="Halpern A.L."/>
            <person name="Mobarry C.M."/>
            <person name="Lippert R."/>
            <person name="Walenz B."/>
            <person name="Shatkay H."/>
            <person name="Dew I."/>
            <person name="Miller J.R."/>
            <person name="Flanigan M.J."/>
            <person name="Edwards N.J."/>
            <person name="Bolanos R."/>
            <person name="Fasulo D."/>
            <person name="Halldorsson B.V."/>
            <person name="Hannenhalli S."/>
            <person name="Turner R."/>
            <person name="Yooseph S."/>
            <person name="Lu F."/>
            <person name="Nusskern D.R."/>
            <person name="Shue B.C."/>
            <person name="Zheng X.H."/>
            <person name="Zhong F."/>
            <person name="Delcher A.L."/>
            <person name="Huson D.H."/>
            <person name="Kravitz S.A."/>
            <person name="Mouchard L."/>
            <person name="Reinert K."/>
            <person name="Remington K.A."/>
            <person name="Clark A.G."/>
            <person name="Waterman M.S."/>
            <person name="Eichler E.E."/>
            <person name="Adams M.D."/>
            <person name="Hunkapiller M.W."/>
            <person name="Myers E.W."/>
            <person name="Venter J.C."/>
        </authorList>
    </citation>
    <scope>NUCLEOTIDE SEQUENCE [LARGE SCALE GENOMIC DNA]</scope>
</reference>
<reference key="6">
    <citation type="submission" date="2003-03" db="EMBL/GenBank/DDBJ databases">
        <title>Functional characterization of RhCG glycoprotein from human renal proximal cells.</title>
        <authorList>
            <person name="Nakhoul N.L."/>
            <person name="Hamm L.L."/>
            <person name="Abdulnour-Nakhoul S.M."/>
            <person name="De Jong H."/>
        </authorList>
    </citation>
    <scope>NUCLEOTIDE SEQUENCE [MRNA]</scope>
    <source>
        <tissue>Kidney epithelium</tissue>
    </source>
</reference>
<reference key="7">
    <citation type="journal article" date="2004" name="Genome Res.">
        <title>The status, quality, and expansion of the NIH full-length cDNA project: the Mammalian Gene Collection (MGC).</title>
        <authorList>
            <consortium name="The MGC Project Team"/>
        </authorList>
    </citation>
    <scope>NUCLEOTIDE SEQUENCE [LARGE SCALE MRNA]</scope>
    <source>
        <tissue>Kidney</tissue>
    </source>
</reference>
<reference key="8">
    <citation type="journal article" date="2000" name="Nat. Genet.">
        <title>The human Rhesus-associated RhAG protein and a kidney homologue promote ammonium transport in yeast.</title>
        <authorList>
            <person name="Marini A.-M."/>
            <person name="Matassi G."/>
            <person name="Raynal V."/>
            <person name="Andre B."/>
            <person name="Cartron J.-P."/>
            <person name="Cherif-Zahar B."/>
        </authorList>
    </citation>
    <scope>FUNCTION</scope>
    <scope>TRANSPORTER ACTIVITY</scope>
    <scope>TISSUE SPECIFICITY</scope>
</reference>
<reference key="9">
    <citation type="journal article" date="2004" name="J. Biol. Chem.">
        <title>NH3 is involved in the NH4+ transport induced by the functional expression of the human Rh C glycoprotein.</title>
        <authorList>
            <person name="Bakouh N."/>
            <person name="Benjelloun F."/>
            <person name="Hulin P."/>
            <person name="Brouillard F."/>
            <person name="Edelman A."/>
            <person name="Cherif-Zahar B."/>
            <person name="Planelles G."/>
        </authorList>
    </citation>
    <scope>FUNCTION</scope>
    <scope>TRANSPORTER ACTIVITY</scope>
    <scope>BIOPHYSICOCHEMICAL PROPERTIES</scope>
</reference>
<reference key="10">
    <citation type="journal article" date="2005" name="Biochem. J.">
        <title>Human Rhesus B and Rhesus C glycoproteins: properties of facilitated ammonium transport in recombinant kidney cells.</title>
        <authorList>
            <person name="Zidi-Yahiaoui N."/>
            <person name="Mouro-Chanteloup I."/>
            <person name="D'Ambrosio A.-M."/>
            <person name="Lopez C."/>
            <person name="Gane P."/>
            <person name="Le van Kim C."/>
            <person name="Cartron J.-P."/>
            <person name="Colin Y."/>
            <person name="Ripoche P."/>
        </authorList>
    </citation>
    <scope>FUNCTION</scope>
    <scope>TRANSPORTER ACTIVITY</scope>
    <scope>SUBCELLULAR LOCATION</scope>
</reference>
<reference key="11">
    <citation type="journal article" date="2006" name="Curr. Genet.">
        <title>Structural involvement in substrate recognition of an essential aspartate residue conserved in Mep/Amt and Rh-type ammonium transporters.</title>
        <authorList>
            <person name="Marini A.-M."/>
            <person name="Boeckstaens M."/>
            <person name="Benjelloun F."/>
            <person name="Cherif-Zahar B."/>
            <person name="Andre B."/>
        </authorList>
    </citation>
    <scope>FUNCTION</scope>
    <scope>TRANSPORTER ACTIVITY</scope>
    <scope>MUTAGENESIS OF ASP-177</scope>
</reference>
<reference key="12">
    <citation type="journal article" date="2006" name="Transfus. Clin. Biol.">
        <title>Ammonium transport properties of HEK293 cells expressing RhCG mutants: preliminary analysis of structure/function by site-directed mutagenesis.</title>
        <authorList>
            <person name="Zidi-Yahiaoui N."/>
            <person name="Ripoche P."/>
            <person name="Le Van Kim C."/>
            <person name="Gane P."/>
            <person name="D'Ambrosio A.-M."/>
            <person name="Cartron J.-P."/>
            <person name="Colin Y."/>
            <person name="Mouro-Chanteloup I."/>
        </authorList>
    </citation>
    <scope>FUNCTION</scope>
    <scope>TRANSPORTER ACTIVITY</scope>
    <scope>MUTAGENESIS OF PHE-74; VAL-137 AND PHE-235</scope>
</reference>
<reference key="13">
    <citation type="journal article" date="2013" name="J. Membr. Biol.">
        <title>Relative CO(2)/NH(3) permeabilities of human RhAG, RhBG and RhCG.</title>
        <authorList>
            <person name="Geyer R.R."/>
            <person name="Parker M.D."/>
            <person name="Toye A.M."/>
            <person name="Boron W.F."/>
            <person name="Musa-Aziz R."/>
        </authorList>
    </citation>
    <scope>FUNCTION</scope>
    <scope>TRANSPORTER ACTIVITY</scope>
    <scope>MUTAGENESIS OF ASP-177</scope>
</reference>
<reference key="14">
    <citation type="journal article" date="2010" name="Proc. Natl. Acad. Sci. U.S.A.">
        <title>Function of human Rh based on structure of RhCG at 2.1 A.</title>
        <authorList>
            <person name="Gruswitz F."/>
            <person name="Chaudhary S."/>
            <person name="Ho J.D."/>
            <person name="Schlessinger A."/>
            <person name="Pezeshki B."/>
            <person name="Ho C.M."/>
            <person name="Sali A."/>
            <person name="Westhoff C.M."/>
            <person name="Stroud R.M."/>
        </authorList>
    </citation>
    <scope>X-RAY CRYSTALLOGRAPHY (2.1 ANGSTROMS) OF 2-479</scope>
    <scope>SUBUNIT</scope>
    <scope>GLYCOSYLATION AT ASN-48</scope>
</reference>
<name>RHCG_HUMAN</name>
<proteinExistence type="evidence at protein level"/>
<organism>
    <name type="scientific">Homo sapiens</name>
    <name type="common">Human</name>
    <dbReference type="NCBI Taxonomy" id="9606"/>
    <lineage>
        <taxon>Eukaryota</taxon>
        <taxon>Metazoa</taxon>
        <taxon>Chordata</taxon>
        <taxon>Craniata</taxon>
        <taxon>Vertebrata</taxon>
        <taxon>Euteleostomi</taxon>
        <taxon>Mammalia</taxon>
        <taxon>Eutheria</taxon>
        <taxon>Euarchontoglires</taxon>
        <taxon>Primates</taxon>
        <taxon>Haplorrhini</taxon>
        <taxon>Catarrhini</taxon>
        <taxon>Hominidae</taxon>
        <taxon>Homo</taxon>
    </lineage>
</organism>
<accession>Q9UBD6</accession>
<accession>A8K4D4</accession>
<accession>Q6X3Y4</accession>
<gene>
    <name type="primary">RHCG</name>
    <name type="synonym">C15orf6</name>
    <name type="synonym">CDRC2</name>
    <name type="synonym">PDRC2</name>
    <name type="synonym">RHGK</name>
</gene>
<comment type="function">
    <text evidence="4 6 7 8 9 11">Ammonium transporter involved in the maintenance of acid-base homeostasis. Transports ammonium and its related derivative methylammonium across the plasma membrane of epithelial cells likely contributing to renal transepithelial ammonia transport and ammonia metabolism. Postulated to primarily mediate an electroneutral bidirectional transport of NH3 ammonia species according to a mechanism that implies interaction of an NH4(+) ion with acidic residues of the pore entry followed by dissociation of NH4(+) into NH3 and H(+). As a result NH3 transits through the central pore and is protonated on the extracellular side reforming NH4(+) (PubMed:11062476, PubMed:14761968, PubMed:15929723, PubMed:16477434, PubMed:16580862, PubMed:24077989). May act as a CO2 channel providing for renal acid secretion (PubMed:24077989).</text>
</comment>
<comment type="catalytic activity">
    <reaction evidence="4 6 7 8 9 11">
        <text>NH4(+)(in) = NH4(+)(out)</text>
        <dbReference type="Rhea" id="RHEA:28747"/>
        <dbReference type="ChEBI" id="CHEBI:28938"/>
    </reaction>
    <physiologicalReaction direction="left-to-right" evidence="13 14 15 16 17 18">
        <dbReference type="Rhea" id="RHEA:28748"/>
    </physiologicalReaction>
    <physiologicalReaction direction="right-to-left" evidence="15">
        <dbReference type="Rhea" id="RHEA:28749"/>
    </physiologicalReaction>
</comment>
<comment type="catalytic activity">
    <reaction evidence="6 7">
        <text>methylamine(out) = methylamine(in)</text>
        <dbReference type="Rhea" id="RHEA:74391"/>
        <dbReference type="ChEBI" id="CHEBI:59338"/>
    </reaction>
    <physiologicalReaction direction="left-to-right" evidence="14 15">
        <dbReference type="Rhea" id="RHEA:74392"/>
    </physiologicalReaction>
</comment>
<comment type="catalytic activity">
    <reaction evidence="11">
        <text>CO2(out) = CO2(in)</text>
        <dbReference type="Rhea" id="RHEA:74891"/>
        <dbReference type="ChEBI" id="CHEBI:16526"/>
    </reaction>
    <physiologicalReaction direction="left-to-right" evidence="18">
        <dbReference type="Rhea" id="RHEA:74892"/>
    </physiologicalReaction>
</comment>
<comment type="biophysicochemical properties">
    <kinetics>
        <KM evidence="6">116 uM for NH4(+) (at pH 8.13)</KM>
        <KM evidence="6">137 uM for NH4(+) (at pH 8.23)</KM>
        <KM evidence="6">7.7 uM for NH3 (at pH 7.44)</KM>
        <KM evidence="6">7.6 uM for NH3 (at pH 7.74)</KM>
    </kinetics>
</comment>
<comment type="subunit">
    <text evidence="10">Homotrimer.</text>
</comment>
<comment type="interaction">
    <interactant intactId="EBI-15853497">
        <id>Q9UBD6</id>
    </interactant>
    <interactant intactId="EBI-12062109">
        <id>Q86Z23</id>
        <label>C1QL4</label>
    </interactant>
    <organismsDiffer>false</organismsDiffer>
    <experiments>3</experiments>
</comment>
<comment type="interaction">
    <interactant intactId="EBI-15853497">
        <id>Q9UBD6</id>
    </interactant>
    <interactant intactId="EBI-12003442">
        <id>Q8WVX3-2</id>
        <label>C4orf3</label>
    </interactant>
    <organismsDiffer>false</organismsDiffer>
    <experiments>3</experiments>
</comment>
<comment type="interaction">
    <interactant intactId="EBI-15853497">
        <id>Q9UBD6</id>
    </interactant>
    <interactant intactId="EBI-3911467">
        <id>Q07325</id>
        <label>CXCL9</label>
    </interactant>
    <organismsDiffer>false</organismsDiffer>
    <experiments>3</experiments>
</comment>
<comment type="interaction">
    <interactant intactId="EBI-15853497">
        <id>Q9UBD6</id>
    </interactant>
    <interactant intactId="EBI-1753674">
        <id>P52803</id>
        <label>EFNA5</label>
    </interactant>
    <organismsDiffer>false</organismsDiffer>
    <experiments>3</experiments>
</comment>
<comment type="interaction">
    <interactant intactId="EBI-15853497">
        <id>Q9UBD6</id>
    </interactant>
    <interactant intactId="EBI-10976398">
        <id>Q7Z2K6</id>
        <label>ERMP1</label>
    </interactant>
    <organismsDiffer>false</organismsDiffer>
    <experiments>3</experiments>
</comment>
<comment type="interaction">
    <interactant intactId="EBI-15853497">
        <id>Q9UBD6</id>
    </interactant>
    <interactant intactId="EBI-713304">
        <id>Q9H0Q3</id>
        <label>FXYD6</label>
    </interactant>
    <organismsDiffer>false</organismsDiffer>
    <experiments>3</experiments>
</comment>
<comment type="interaction">
    <interactant intactId="EBI-15853497">
        <id>Q9UBD6</id>
    </interactant>
    <interactant intactId="EBI-10178951">
        <id>O00155</id>
        <label>GPR25</label>
    </interactant>
    <organismsDiffer>false</organismsDiffer>
    <experiments>3</experiments>
</comment>
<comment type="interaction">
    <interactant intactId="EBI-15853497">
        <id>Q9UBD6</id>
    </interactant>
    <interactant intactId="EBI-720480">
        <id>P24593</id>
        <label>IGFBP5</label>
    </interactant>
    <organismsDiffer>false</organismsDiffer>
    <experiments>3</experiments>
</comment>
<comment type="interaction">
    <interactant intactId="EBI-15853497">
        <id>Q9UBD6</id>
    </interactant>
    <interactant intactId="EBI-15672507">
        <id>O15243</id>
        <label>LEPROT</label>
    </interactant>
    <organismsDiffer>false</organismsDiffer>
    <experiments>3</experiments>
</comment>
<comment type="interaction">
    <interactant intactId="EBI-15853497">
        <id>Q9UBD6</id>
    </interactant>
    <interactant intactId="EBI-12070086">
        <id>Q5J8X5</id>
        <label>MS4A13</label>
    </interactant>
    <organismsDiffer>false</organismsDiffer>
    <experiments>3</experiments>
</comment>
<comment type="interaction">
    <interactant intactId="EBI-15853497">
        <id>Q9UBD6</id>
    </interactant>
    <interactant intactId="EBI-15853497">
        <id>Q9UBD6</id>
        <label>RHCG</label>
    </interactant>
    <organismsDiffer>false</organismsDiffer>
    <experiments>2</experiments>
</comment>
<comment type="interaction">
    <interactant intactId="EBI-15853497">
        <id>Q9UBD6</id>
    </interactant>
    <interactant intactId="EBI-1564650">
        <id>Q14108</id>
        <label>SCARB2</label>
    </interactant>
    <organismsDiffer>false</organismsDiffer>
    <experiments>2</experiments>
</comment>
<comment type="interaction">
    <interactant intactId="EBI-15853497">
        <id>Q9UBD6</id>
    </interactant>
    <interactant intactId="EBI-2852148">
        <id>Q9H2L4</id>
        <label>TMEM60</label>
    </interactant>
    <organismsDiffer>false</organismsDiffer>
    <experiments>3</experiments>
</comment>
<comment type="interaction">
    <interactant intactId="EBI-15853497">
        <id>Q9UBD6</id>
    </interactant>
    <interactant intactId="EBI-12111910">
        <id>Q5BJF2</id>
        <label>TMEM97</label>
    </interactant>
    <organismsDiffer>false</organismsDiffer>
    <experiments>3</experiments>
</comment>
<comment type="interaction">
    <interactant intactId="EBI-15853497">
        <id>Q9UBD6</id>
    </interactant>
    <interactant intactId="EBI-11988865">
        <id>A5PKU2</id>
        <label>TUSC5</label>
    </interactant>
    <organismsDiffer>false</organismsDiffer>
    <experiments>3</experiments>
</comment>
<comment type="interaction">
    <interactant intactId="EBI-15853497">
        <id>Q9UBD6</id>
    </interactant>
    <interactant intactId="EBI-12237619">
        <id>O75841</id>
        <label>UPK1B</label>
    </interactant>
    <organismsDiffer>false</organismsDiffer>
    <experiments>3</experiments>
</comment>
<comment type="interaction">
    <interactant intactId="EBI-15853497">
        <id>Q9UBD6</id>
    </interactant>
    <interactant intactId="EBI-751210">
        <id>Q96EC8</id>
        <label>YIPF6</label>
    </interactant>
    <organismsDiffer>false</organismsDiffer>
    <experiments>3</experiments>
</comment>
<comment type="subcellular location">
    <subcellularLocation>
        <location evidence="7">Cell membrane</location>
        <topology evidence="2">Multi-pass membrane protein</topology>
    </subcellularLocation>
    <subcellularLocation>
        <location evidence="3 5">Apical cell membrane</location>
        <topology evidence="2">Multi-pass membrane protein</topology>
    </subcellularLocation>
    <text evidence="1">Also detected at the basolateral membrane and in subapical vesicles.</text>
</comment>
<comment type="tissue specificity">
    <text evidence="3 4 5">Expressed in brain, testis, placenta, pancreas, esophagus and prostate. Expressed in squamous epithelial tissues (at protein level). Expressed in kidney.</text>
</comment>
<comment type="developmental stage">
    <text evidence="3">Specifically expressed in fetal kidney.</text>
</comment>
<comment type="PTM">
    <text evidence="3 10">N-glycosylated.</text>
</comment>
<comment type="similarity">
    <text evidence="12">Belongs to the ammonium transporter (TC 2.A.49) family. Rh subfamily.</text>
</comment>
<protein>
    <recommendedName>
        <fullName>Ammonium transporter Rh type C</fullName>
    </recommendedName>
    <alternativeName>
        <fullName>Rh glycoprotein kidney</fullName>
    </alternativeName>
    <alternativeName>
        <fullName>Rhesus blood group family type C glycoprotein</fullName>
        <shortName>Rh family type C glycoprotein</shortName>
        <shortName>Rh type C glycoprotein</shortName>
    </alternativeName>
    <alternativeName>
        <fullName>Tumor-related protein DRC2</fullName>
    </alternativeName>
</protein>